<comment type="function">
    <text evidence="1">Quinone reductase that provides resistance to thiol-specific stress caused by electrophilic quinones.</text>
</comment>
<comment type="function">
    <text evidence="1">Also exhibits azoreductase activity. Catalyzes the reductive cleavage of the azo bond in aromatic azo compounds to the corresponding amines.</text>
</comment>
<comment type="catalytic activity">
    <reaction evidence="1">
        <text>2 a quinone + NADH + H(+) = 2 a 1,4-benzosemiquinone + NAD(+)</text>
        <dbReference type="Rhea" id="RHEA:65952"/>
        <dbReference type="ChEBI" id="CHEBI:15378"/>
        <dbReference type="ChEBI" id="CHEBI:57540"/>
        <dbReference type="ChEBI" id="CHEBI:57945"/>
        <dbReference type="ChEBI" id="CHEBI:132124"/>
        <dbReference type="ChEBI" id="CHEBI:134225"/>
    </reaction>
</comment>
<comment type="catalytic activity">
    <reaction evidence="1">
        <text>N,N-dimethyl-1,4-phenylenediamine + anthranilate + 2 NAD(+) = 2-(4-dimethylaminophenyl)diazenylbenzoate + 2 NADH + 2 H(+)</text>
        <dbReference type="Rhea" id="RHEA:55872"/>
        <dbReference type="ChEBI" id="CHEBI:15378"/>
        <dbReference type="ChEBI" id="CHEBI:15783"/>
        <dbReference type="ChEBI" id="CHEBI:16567"/>
        <dbReference type="ChEBI" id="CHEBI:57540"/>
        <dbReference type="ChEBI" id="CHEBI:57945"/>
        <dbReference type="ChEBI" id="CHEBI:71579"/>
        <dbReference type="EC" id="1.7.1.17"/>
    </reaction>
</comment>
<comment type="cofactor">
    <cofactor evidence="1">
        <name>FMN</name>
        <dbReference type="ChEBI" id="CHEBI:58210"/>
    </cofactor>
    <text evidence="1">Binds 1 FMN per subunit.</text>
</comment>
<comment type="subunit">
    <text evidence="1">Homodimer.</text>
</comment>
<comment type="similarity">
    <text evidence="1">Belongs to the azoreductase type 1 family.</text>
</comment>
<evidence type="ECO:0000255" key="1">
    <source>
        <dbReference type="HAMAP-Rule" id="MF_01216"/>
    </source>
</evidence>
<feature type="chain" id="PRO_0000166351" description="FMN-dependent NADH:quinone oxidoreductase">
    <location>
        <begin position="1"/>
        <end position="210"/>
    </location>
</feature>
<feature type="binding site" evidence="1">
    <location>
        <position position="9"/>
    </location>
    <ligand>
        <name>FMN</name>
        <dbReference type="ChEBI" id="CHEBI:58210"/>
    </ligand>
</feature>
<feature type="binding site" evidence="1">
    <location>
        <begin position="15"/>
        <end position="17"/>
    </location>
    <ligand>
        <name>FMN</name>
        <dbReference type="ChEBI" id="CHEBI:58210"/>
    </ligand>
</feature>
<reference key="1">
    <citation type="journal article" date="2000" name="DNA Res.">
        <title>Complete genome structure of the nitrogen-fixing symbiotic bacterium Mesorhizobium loti.</title>
        <authorList>
            <person name="Kaneko T."/>
            <person name="Nakamura Y."/>
            <person name="Sato S."/>
            <person name="Asamizu E."/>
            <person name="Kato T."/>
            <person name="Sasamoto S."/>
            <person name="Watanabe A."/>
            <person name="Idesawa K."/>
            <person name="Ishikawa A."/>
            <person name="Kawashima K."/>
            <person name="Kimura T."/>
            <person name="Kishida Y."/>
            <person name="Kiyokawa C."/>
            <person name="Kohara M."/>
            <person name="Matsumoto M."/>
            <person name="Matsuno A."/>
            <person name="Mochizuki Y."/>
            <person name="Nakayama S."/>
            <person name="Nakazaki N."/>
            <person name="Shimpo S."/>
            <person name="Sugimoto M."/>
            <person name="Takeuchi C."/>
            <person name="Yamada M."/>
            <person name="Tabata S."/>
        </authorList>
    </citation>
    <scope>NUCLEOTIDE SEQUENCE [LARGE SCALE GENOMIC DNA]</scope>
    <source>
        <strain>LMG 29417 / CECT 9101 / MAFF 303099</strain>
    </source>
</reference>
<proteinExistence type="inferred from homology"/>
<organism>
    <name type="scientific">Mesorhizobium japonicum (strain LMG 29417 / CECT 9101 / MAFF 303099)</name>
    <name type="common">Mesorhizobium loti (strain MAFF 303099)</name>
    <dbReference type="NCBI Taxonomy" id="266835"/>
    <lineage>
        <taxon>Bacteria</taxon>
        <taxon>Pseudomonadati</taxon>
        <taxon>Pseudomonadota</taxon>
        <taxon>Alphaproteobacteria</taxon>
        <taxon>Hyphomicrobiales</taxon>
        <taxon>Phyllobacteriaceae</taxon>
        <taxon>Mesorhizobium</taxon>
    </lineage>
</organism>
<name>AZOR_RHILO</name>
<keyword id="KW-0285">Flavoprotein</keyword>
<keyword id="KW-0288">FMN</keyword>
<keyword id="KW-0520">NAD</keyword>
<keyword id="KW-0560">Oxidoreductase</keyword>
<gene>
    <name evidence="1" type="primary">azoR</name>
    <name type="ordered locus">mlr2421</name>
</gene>
<accession>Q98IF8</accession>
<protein>
    <recommendedName>
        <fullName evidence="1">FMN-dependent NADH:quinone oxidoreductase</fullName>
        <ecNumber evidence="1">1.6.5.-</ecNumber>
    </recommendedName>
    <alternativeName>
        <fullName evidence="1">Azo-dye reductase</fullName>
    </alternativeName>
    <alternativeName>
        <fullName evidence="1">FMN-dependent NADH-azo compound oxidoreductase</fullName>
    </alternativeName>
    <alternativeName>
        <fullName evidence="1">FMN-dependent NADH-azoreductase</fullName>
        <ecNumber evidence="1">1.7.1.17</ecNumber>
    </alternativeName>
</protein>
<sequence length="210" mass="21813">MSILLVTSSPRGAASHSTRIATEFAEKLLAADPSNTLVVRDLVANPLPHIDADYATGIYTPVEARTPRQAEVVGVSDVVLDELFAADTVILATGFINFNISSTLKSWVDHIARSGRSFAYGENGPKGLVTGKKVYIVLASGGIYSEGAAVQFDHAIPYLRGVLGFLGMTDVDVIRIEGVGMGPDAVTAALAKATAKVDAVVASQQAAAAA</sequence>
<dbReference type="EC" id="1.6.5.-" evidence="1"/>
<dbReference type="EC" id="1.7.1.17" evidence="1"/>
<dbReference type="EMBL" id="BA000012">
    <property type="protein sequence ID" value="BAB49558.1"/>
    <property type="molecule type" value="Genomic_DNA"/>
</dbReference>
<dbReference type="RefSeq" id="WP_010910910.1">
    <property type="nucleotide sequence ID" value="NC_002678.2"/>
</dbReference>
<dbReference type="SMR" id="Q98IF8"/>
<dbReference type="KEGG" id="mlo:mlr2421"/>
<dbReference type="PATRIC" id="fig|266835.9.peg.1951"/>
<dbReference type="eggNOG" id="COG1182">
    <property type="taxonomic scope" value="Bacteria"/>
</dbReference>
<dbReference type="HOGENOM" id="CLU_088964_0_0_5"/>
<dbReference type="Proteomes" id="UP000000552">
    <property type="component" value="Chromosome"/>
</dbReference>
<dbReference type="GO" id="GO:0009055">
    <property type="term" value="F:electron transfer activity"/>
    <property type="evidence" value="ECO:0007669"/>
    <property type="project" value="UniProtKB-UniRule"/>
</dbReference>
<dbReference type="GO" id="GO:0010181">
    <property type="term" value="F:FMN binding"/>
    <property type="evidence" value="ECO:0007669"/>
    <property type="project" value="UniProtKB-UniRule"/>
</dbReference>
<dbReference type="GO" id="GO:0016652">
    <property type="term" value="F:oxidoreductase activity, acting on NAD(P)H as acceptor"/>
    <property type="evidence" value="ECO:0007669"/>
    <property type="project" value="UniProtKB-UniRule"/>
</dbReference>
<dbReference type="GO" id="GO:0016655">
    <property type="term" value="F:oxidoreductase activity, acting on NAD(P)H, quinone or similar compound as acceptor"/>
    <property type="evidence" value="ECO:0007669"/>
    <property type="project" value="InterPro"/>
</dbReference>
<dbReference type="Gene3D" id="3.40.50.360">
    <property type="match status" value="1"/>
</dbReference>
<dbReference type="HAMAP" id="MF_01216">
    <property type="entry name" value="Azoreductase_type1"/>
    <property type="match status" value="1"/>
</dbReference>
<dbReference type="InterPro" id="IPR003680">
    <property type="entry name" value="Flavodoxin_fold"/>
</dbReference>
<dbReference type="InterPro" id="IPR029039">
    <property type="entry name" value="Flavoprotein-like_sf"/>
</dbReference>
<dbReference type="InterPro" id="IPR050104">
    <property type="entry name" value="FMN-dep_NADH:Q_OxRdtase_AzoR1"/>
</dbReference>
<dbReference type="InterPro" id="IPR023048">
    <property type="entry name" value="NADH:quinone_OxRdtase_FMN_depd"/>
</dbReference>
<dbReference type="PANTHER" id="PTHR43741">
    <property type="entry name" value="FMN-DEPENDENT NADH-AZOREDUCTASE 1"/>
    <property type="match status" value="1"/>
</dbReference>
<dbReference type="PANTHER" id="PTHR43741:SF2">
    <property type="entry name" value="FMN-DEPENDENT NADH:QUINONE OXIDOREDUCTASE"/>
    <property type="match status" value="1"/>
</dbReference>
<dbReference type="Pfam" id="PF02525">
    <property type="entry name" value="Flavodoxin_2"/>
    <property type="match status" value="1"/>
</dbReference>
<dbReference type="SUPFAM" id="SSF52218">
    <property type="entry name" value="Flavoproteins"/>
    <property type="match status" value="1"/>
</dbReference>